<geneLocation type="chloroplast"/>
<sequence>MFNFLFNSSNQRKINSYAPIVKKINALEIEMQDLPDKVLRAKSVQFKSRLQNGENLDDILVEAFAVVREAGLRVLGLRVFDVQMMGAIILHQGKIAEMKTGEGKTLVATLAGYLNALSGEGVHVVTVNDYLAKRDSEWVGQIHKFLGLSVGLIQQALPKVERKLAYQCDVTYVTNSELGFDYLKDNMVLSMSEIVQNKFAFCIIDEVDSILIDEARTPLIISGPSEAPIEKYSRTKLLANILSKDVHYEVDEKARNIILTEQGTLFCEEYLSINNLYDLENPWVQYILNAIKARELFTKDVHYIIRDKEVVIVDEFTGRIMSGRRWSDGLHQAIEAKEDVVIQQENQTYASITYQNFFLLYPKLSGMTGTAKTEESELDKIYNLEVICVPTHKPLRRKEFPDLVYSNEYRKWEAIADECYDMYRVGRPTLVGTTSVEKSELLSKLLNQYKIPHSLLNAKPENVEKESDIIAQAGRQSSVTIATNMAGRGTDIILGGNPSYIAKSILVDLLIGKSSVKNNYKLQQLSPNTKISLNNILNALETDLHSVDFSMLEMEKKISIACEQVLTDDKLEIQLRKAYQMIFEEFETIFSKEREYVSQAGGLHVIGTERHESRRIDNQLRGRAGRQGDPGSSRFFLSVDDNLLRIFGGNKIADLMQALNVDNDTPMESTLLSKSLEAAQKKVEAYFYDTRKQVFEYDQVLNSQRQAIYAERRRILESSYPRDCVLQYAESTIDDIITFWLTSKENPEKFVNLNIKIKYLLNAADTFSISKDLYKDSEELKKWIIEQVRINYDLREAYLEQIKPGLIRQLEKYYLLQQIDNAWKDHLQKMGALRDSIGWRSYGQQDPLVEYKNEAFNLFIEMITHVKHTVVYAILRSRLMMKND</sequence>
<protein>
    <recommendedName>
        <fullName evidence="1">Protein translocase subunit SecA</fullName>
        <ecNumber evidence="1">7.4.2.8</ecNumber>
    </recommendedName>
</protein>
<reference key="1">
    <citation type="submission" date="2003-11" db="EMBL/GenBank/DDBJ databases">
        <title>Whole genome sequence of Porphyra yezoensis chloroplast.</title>
        <authorList>
            <person name="Kunimoto M."/>
            <person name="Morishima K."/>
            <person name="Yoshikawa M."/>
            <person name="Fukuda S."/>
            <person name="Kobayashi T."/>
            <person name="Kobayashi M."/>
            <person name="Okazaki T."/>
            <person name="Ohara I."/>
            <person name="Nakayama I."/>
        </authorList>
    </citation>
    <scope>NUCLEOTIDE SEQUENCE [LARGE SCALE GENOMIC DNA]</scope>
    <source>
        <strain>U-51</strain>
    </source>
</reference>
<accession>Q1XDA6</accession>
<dbReference type="EC" id="7.4.2.8" evidence="1"/>
<dbReference type="EMBL" id="AP006715">
    <property type="protein sequence ID" value="BAE92505.1"/>
    <property type="molecule type" value="Genomic_DNA"/>
</dbReference>
<dbReference type="RefSeq" id="YP_537062.1">
    <property type="nucleotide sequence ID" value="NC_007932.1"/>
</dbReference>
<dbReference type="SMR" id="Q1XDA6"/>
<dbReference type="GeneID" id="3978773"/>
<dbReference type="GO" id="GO:0009570">
    <property type="term" value="C:chloroplast stroma"/>
    <property type="evidence" value="ECO:0007669"/>
    <property type="project" value="UniProtKB-SubCell"/>
</dbReference>
<dbReference type="GO" id="GO:0009535">
    <property type="term" value="C:chloroplast thylakoid membrane"/>
    <property type="evidence" value="ECO:0007669"/>
    <property type="project" value="UniProtKB-SubCell"/>
</dbReference>
<dbReference type="GO" id="GO:0005829">
    <property type="term" value="C:cytosol"/>
    <property type="evidence" value="ECO:0007669"/>
    <property type="project" value="TreeGrafter"/>
</dbReference>
<dbReference type="GO" id="GO:0005886">
    <property type="term" value="C:plasma membrane"/>
    <property type="evidence" value="ECO:0007669"/>
    <property type="project" value="TreeGrafter"/>
</dbReference>
<dbReference type="GO" id="GO:0005524">
    <property type="term" value="F:ATP binding"/>
    <property type="evidence" value="ECO:0007669"/>
    <property type="project" value="UniProtKB-UniRule"/>
</dbReference>
<dbReference type="GO" id="GO:0008564">
    <property type="term" value="F:protein-exporting ATPase activity"/>
    <property type="evidence" value="ECO:0007669"/>
    <property type="project" value="UniProtKB-EC"/>
</dbReference>
<dbReference type="GO" id="GO:0065002">
    <property type="term" value="P:intracellular protein transmembrane transport"/>
    <property type="evidence" value="ECO:0007669"/>
    <property type="project" value="UniProtKB-UniRule"/>
</dbReference>
<dbReference type="GO" id="GO:0017038">
    <property type="term" value="P:protein import"/>
    <property type="evidence" value="ECO:0007669"/>
    <property type="project" value="InterPro"/>
</dbReference>
<dbReference type="GO" id="GO:0006605">
    <property type="term" value="P:protein targeting"/>
    <property type="evidence" value="ECO:0007669"/>
    <property type="project" value="UniProtKB-UniRule"/>
</dbReference>
<dbReference type="CDD" id="cd17928">
    <property type="entry name" value="DEXDc_SecA"/>
    <property type="match status" value="1"/>
</dbReference>
<dbReference type="CDD" id="cd18803">
    <property type="entry name" value="SF2_C_secA"/>
    <property type="match status" value="1"/>
</dbReference>
<dbReference type="FunFam" id="3.90.1440.10:FF:000003">
    <property type="entry name" value="Preprotein translocase SecA subunit"/>
    <property type="match status" value="1"/>
</dbReference>
<dbReference type="FunFam" id="3.40.50.300:FF:000334">
    <property type="entry name" value="Protein translocase subunit SecA"/>
    <property type="match status" value="1"/>
</dbReference>
<dbReference type="Gene3D" id="1.10.3060.10">
    <property type="entry name" value="Helical scaffold and wing domains of SecA"/>
    <property type="match status" value="1"/>
</dbReference>
<dbReference type="Gene3D" id="3.40.50.300">
    <property type="entry name" value="P-loop containing nucleotide triphosphate hydrolases"/>
    <property type="match status" value="2"/>
</dbReference>
<dbReference type="Gene3D" id="3.90.1440.10">
    <property type="entry name" value="SecA, preprotein cross-linking domain"/>
    <property type="match status" value="1"/>
</dbReference>
<dbReference type="HAMAP" id="MF_01382">
    <property type="entry name" value="SecA"/>
    <property type="match status" value="1"/>
</dbReference>
<dbReference type="InterPro" id="IPR014001">
    <property type="entry name" value="Helicase_ATP-bd"/>
</dbReference>
<dbReference type="InterPro" id="IPR027417">
    <property type="entry name" value="P-loop_NTPase"/>
</dbReference>
<dbReference type="InterPro" id="IPR000185">
    <property type="entry name" value="SecA"/>
</dbReference>
<dbReference type="InterPro" id="IPR020937">
    <property type="entry name" value="SecA_CS"/>
</dbReference>
<dbReference type="InterPro" id="IPR011115">
    <property type="entry name" value="SecA_DEAD"/>
</dbReference>
<dbReference type="InterPro" id="IPR014018">
    <property type="entry name" value="SecA_motor_DEAD"/>
</dbReference>
<dbReference type="InterPro" id="IPR011130">
    <property type="entry name" value="SecA_preprotein_X-link_dom"/>
</dbReference>
<dbReference type="InterPro" id="IPR044722">
    <property type="entry name" value="SecA_SF2_C"/>
</dbReference>
<dbReference type="InterPro" id="IPR011116">
    <property type="entry name" value="SecA_Wing/Scaffold"/>
</dbReference>
<dbReference type="InterPro" id="IPR036266">
    <property type="entry name" value="SecA_Wing/Scaffold_sf"/>
</dbReference>
<dbReference type="InterPro" id="IPR036670">
    <property type="entry name" value="SecA_X-link_sf"/>
</dbReference>
<dbReference type="NCBIfam" id="NF009538">
    <property type="entry name" value="PRK12904.1"/>
    <property type="match status" value="1"/>
</dbReference>
<dbReference type="NCBIfam" id="TIGR00963">
    <property type="entry name" value="secA"/>
    <property type="match status" value="1"/>
</dbReference>
<dbReference type="PANTHER" id="PTHR30612:SF0">
    <property type="entry name" value="CHLOROPLAST PROTEIN-TRANSPORTING ATPASE"/>
    <property type="match status" value="1"/>
</dbReference>
<dbReference type="PANTHER" id="PTHR30612">
    <property type="entry name" value="SECA INNER MEMBRANE COMPONENT OF SEC PROTEIN SECRETION SYSTEM"/>
    <property type="match status" value="1"/>
</dbReference>
<dbReference type="Pfam" id="PF21090">
    <property type="entry name" value="P-loop_SecA"/>
    <property type="match status" value="1"/>
</dbReference>
<dbReference type="Pfam" id="PF07517">
    <property type="entry name" value="SecA_DEAD"/>
    <property type="match status" value="1"/>
</dbReference>
<dbReference type="Pfam" id="PF01043">
    <property type="entry name" value="SecA_PP_bind"/>
    <property type="match status" value="1"/>
</dbReference>
<dbReference type="Pfam" id="PF07516">
    <property type="entry name" value="SecA_SW"/>
    <property type="match status" value="1"/>
</dbReference>
<dbReference type="PRINTS" id="PR00906">
    <property type="entry name" value="SECA"/>
</dbReference>
<dbReference type="SMART" id="SM00957">
    <property type="entry name" value="SecA_DEAD"/>
    <property type="match status" value="1"/>
</dbReference>
<dbReference type="SMART" id="SM00958">
    <property type="entry name" value="SecA_PP_bind"/>
    <property type="match status" value="1"/>
</dbReference>
<dbReference type="SUPFAM" id="SSF81886">
    <property type="entry name" value="Helical scaffold and wing domains of SecA"/>
    <property type="match status" value="1"/>
</dbReference>
<dbReference type="SUPFAM" id="SSF52540">
    <property type="entry name" value="P-loop containing nucleoside triphosphate hydrolases"/>
    <property type="match status" value="2"/>
</dbReference>
<dbReference type="SUPFAM" id="SSF81767">
    <property type="entry name" value="Pre-protein crosslinking domain of SecA"/>
    <property type="match status" value="1"/>
</dbReference>
<dbReference type="PROSITE" id="PS01312">
    <property type="entry name" value="SECA"/>
    <property type="match status" value="1"/>
</dbReference>
<dbReference type="PROSITE" id="PS51196">
    <property type="entry name" value="SECA_MOTOR_DEAD"/>
    <property type="match status" value="1"/>
</dbReference>
<keyword id="KW-0067">ATP-binding</keyword>
<keyword id="KW-0150">Chloroplast</keyword>
<keyword id="KW-0472">Membrane</keyword>
<keyword id="KW-0547">Nucleotide-binding</keyword>
<keyword id="KW-0934">Plastid</keyword>
<keyword id="KW-0653">Protein transport</keyword>
<keyword id="KW-0793">Thylakoid</keyword>
<keyword id="KW-1278">Translocase</keyword>
<keyword id="KW-0811">Translocation</keyword>
<keyword id="KW-0813">Transport</keyword>
<feature type="chain" id="PRO_0000277298" description="Protein translocase subunit SecA">
    <location>
        <begin position="1"/>
        <end position="884"/>
    </location>
</feature>
<feature type="binding site" evidence="1">
    <location>
        <position position="83"/>
    </location>
    <ligand>
        <name>ATP</name>
        <dbReference type="ChEBI" id="CHEBI:30616"/>
    </ligand>
</feature>
<feature type="binding site" evidence="1">
    <location>
        <begin position="101"/>
        <end position="105"/>
    </location>
    <ligand>
        <name>ATP</name>
        <dbReference type="ChEBI" id="CHEBI:30616"/>
    </ligand>
</feature>
<feature type="binding site" evidence="1">
    <location>
        <position position="491"/>
    </location>
    <ligand>
        <name>ATP</name>
        <dbReference type="ChEBI" id="CHEBI:30616"/>
    </ligand>
</feature>
<gene>
    <name evidence="1" type="primary">secA</name>
</gene>
<name>SECA_PYRYE</name>
<evidence type="ECO:0000255" key="1">
    <source>
        <dbReference type="HAMAP-Rule" id="MF_01382"/>
    </source>
</evidence>
<comment type="function">
    <text evidence="1">Has a central role in coupling the hydrolysis of ATP to the transfer of proteins across the thylakoid membrane.</text>
</comment>
<comment type="catalytic activity">
    <reaction evidence="1">
        <text>ATP + H2O + cellular proteinSide 1 = ADP + phosphate + cellular proteinSide 2.</text>
        <dbReference type="EC" id="7.4.2.8"/>
    </reaction>
</comment>
<comment type="subcellular location">
    <subcellularLocation>
        <location evidence="1">Plastid</location>
        <location evidence="1">Chloroplast stroma</location>
    </subcellularLocation>
    <subcellularLocation>
        <location evidence="1">Plastid</location>
        <location evidence="1">Chloroplast thylakoid membrane</location>
        <topology evidence="1">Peripheral membrane protein</topology>
    </subcellularLocation>
    <text evidence="1">A minor fraction is associated with the chloroplast thylakoid membrane.</text>
</comment>
<comment type="similarity">
    <text evidence="1">Belongs to the SecA family.</text>
</comment>
<proteinExistence type="inferred from homology"/>
<organism>
    <name type="scientific">Pyropia yezoensis</name>
    <name type="common">Susabi-nori</name>
    <name type="synonym">Porphyra yezoensis</name>
    <dbReference type="NCBI Taxonomy" id="2788"/>
    <lineage>
        <taxon>Eukaryota</taxon>
        <taxon>Rhodophyta</taxon>
        <taxon>Bangiophyceae</taxon>
        <taxon>Bangiales</taxon>
        <taxon>Bangiaceae</taxon>
        <taxon>Pyropia</taxon>
    </lineage>
</organism>